<name>RMD3_XENLA</name>
<accession>Q5EAU9</accession>
<comment type="function">
    <text evidence="1">Involved in cellular calcium homeostasis regulation.</text>
</comment>
<comment type="subunit">
    <text evidence="2">Interacts with PTPN2. Interacts with microtubules. Interacts with VAPB. Interacts (FFAT motif) with MOSPD2 (via MSP domain).</text>
</comment>
<comment type="subcellular location">
    <subcellularLocation>
        <location evidence="2">Mitochondrion outer membrane</location>
        <topology evidence="2">Single-pass membrane protein</topology>
    </subcellularLocation>
    <subcellularLocation>
        <location evidence="2">Cytoplasm</location>
    </subcellularLocation>
    <subcellularLocation>
        <location evidence="2">Nucleus</location>
    </subcellularLocation>
    <subcellularLocation>
        <location evidence="2">Cytoplasm</location>
        <location evidence="2">Cytoskeleton</location>
        <location evidence="2">Spindle</location>
    </subcellularLocation>
    <subcellularLocation>
        <location evidence="2">Cytoplasm</location>
        <location evidence="2">Cytoskeleton</location>
        <location evidence="2">Spindle pole</location>
    </subcellularLocation>
    <text evidence="2">In interphase localizes in the cytoplasm, and during mitosis localizes to the spindle microtubules and spindle poles.</text>
</comment>
<comment type="domain">
    <text evidence="2">The FFAT motif is required for interaction with MOSPD2.</text>
</comment>
<comment type="similarity">
    <text evidence="5">Belongs to the RMDN family.</text>
</comment>
<organism>
    <name type="scientific">Xenopus laevis</name>
    <name type="common">African clawed frog</name>
    <dbReference type="NCBI Taxonomy" id="8355"/>
    <lineage>
        <taxon>Eukaryota</taxon>
        <taxon>Metazoa</taxon>
        <taxon>Chordata</taxon>
        <taxon>Craniata</taxon>
        <taxon>Vertebrata</taxon>
        <taxon>Euteleostomi</taxon>
        <taxon>Amphibia</taxon>
        <taxon>Batrachia</taxon>
        <taxon>Anura</taxon>
        <taxon>Pipoidea</taxon>
        <taxon>Pipidae</taxon>
        <taxon>Xenopodinae</taxon>
        <taxon>Xenopus</taxon>
        <taxon>Xenopus</taxon>
    </lineage>
</organism>
<proteinExistence type="evidence at transcript level"/>
<protein>
    <recommendedName>
        <fullName>Regulator of microtubule dynamics protein 3</fullName>
        <shortName>RMD-3</shortName>
    </recommendedName>
    <alternativeName>
        <fullName>Protein FAM82A2</fullName>
    </alternativeName>
    <alternativeName>
        <fullName>Protein FAM82C</fullName>
    </alternativeName>
</protein>
<keyword id="KW-0175">Coiled coil</keyword>
<keyword id="KW-0963">Cytoplasm</keyword>
<keyword id="KW-0206">Cytoskeleton</keyword>
<keyword id="KW-0472">Membrane</keyword>
<keyword id="KW-0496">Mitochondrion</keyword>
<keyword id="KW-1000">Mitochondrion outer membrane</keyword>
<keyword id="KW-0539">Nucleus</keyword>
<keyword id="KW-1185">Reference proteome</keyword>
<keyword id="KW-0812">Transmembrane</keyword>
<keyword id="KW-1133">Transmembrane helix</keyword>
<gene>
    <name type="primary">rmdn3</name>
    <name type="synonym">fam82a2</name>
    <name type="synonym">fam82c</name>
</gene>
<evidence type="ECO:0000250" key="1"/>
<evidence type="ECO:0000250" key="2">
    <source>
        <dbReference type="UniProtKB" id="Q96TC7"/>
    </source>
</evidence>
<evidence type="ECO:0000255" key="3"/>
<evidence type="ECO:0000256" key="4">
    <source>
        <dbReference type="SAM" id="MobiDB-lite"/>
    </source>
</evidence>
<evidence type="ECO:0000305" key="5"/>
<reference key="1">
    <citation type="submission" date="2005-02" db="EMBL/GenBank/DDBJ databases">
        <authorList>
            <consortium name="NIH - Xenopus Gene Collection (XGC) project"/>
        </authorList>
    </citation>
    <scope>NUCLEOTIDE SEQUENCE [LARGE SCALE MRNA]</scope>
    <source>
        <tissue>Egg</tissue>
    </source>
</reference>
<dbReference type="EMBL" id="BC090235">
    <property type="protein sequence ID" value="AAH90235.1"/>
    <property type="molecule type" value="mRNA"/>
</dbReference>
<dbReference type="RefSeq" id="NP_001089993.1">
    <property type="nucleotide sequence ID" value="NM_001096524.1"/>
</dbReference>
<dbReference type="SMR" id="Q5EAU9"/>
<dbReference type="AGR" id="Xenbase:XB-GENE-5892561"/>
<dbReference type="Xenbase" id="XB-GENE-5892561">
    <property type="gene designation" value="rmdn3.L"/>
</dbReference>
<dbReference type="Proteomes" id="UP000186698">
    <property type="component" value="Unplaced"/>
</dbReference>
<dbReference type="Bgee" id="735064">
    <property type="expression patterns" value="Expressed in brain and 19 other cell types or tissues"/>
</dbReference>
<dbReference type="GO" id="GO:0005737">
    <property type="term" value="C:cytoplasm"/>
    <property type="evidence" value="ECO:0000318"/>
    <property type="project" value="GO_Central"/>
</dbReference>
<dbReference type="GO" id="GO:0005741">
    <property type="term" value="C:mitochondrial outer membrane"/>
    <property type="evidence" value="ECO:0007669"/>
    <property type="project" value="UniProtKB-SubCell"/>
</dbReference>
<dbReference type="GO" id="GO:0005739">
    <property type="term" value="C:mitochondrion"/>
    <property type="evidence" value="ECO:0000318"/>
    <property type="project" value="GO_Central"/>
</dbReference>
<dbReference type="GO" id="GO:0097431">
    <property type="term" value="C:mitotic spindle pole"/>
    <property type="evidence" value="ECO:0000318"/>
    <property type="project" value="GO_Central"/>
</dbReference>
<dbReference type="GO" id="GO:0005634">
    <property type="term" value="C:nucleus"/>
    <property type="evidence" value="ECO:0007669"/>
    <property type="project" value="UniProtKB-SubCell"/>
</dbReference>
<dbReference type="GO" id="GO:0005876">
    <property type="term" value="C:spindle microtubule"/>
    <property type="evidence" value="ECO:0000318"/>
    <property type="project" value="GO_Central"/>
</dbReference>
<dbReference type="GO" id="GO:0008017">
    <property type="term" value="F:microtubule binding"/>
    <property type="evidence" value="ECO:0000318"/>
    <property type="project" value="GO_Central"/>
</dbReference>
<dbReference type="Gene3D" id="1.25.40.10">
    <property type="entry name" value="Tetratricopeptide repeat domain"/>
    <property type="match status" value="1"/>
</dbReference>
<dbReference type="InterPro" id="IPR049039">
    <property type="entry name" value="RMD1-3_a_helical_rpt"/>
</dbReference>
<dbReference type="InterPro" id="IPR011990">
    <property type="entry name" value="TPR-like_helical_dom_sf"/>
</dbReference>
<dbReference type="PANTHER" id="PTHR16056">
    <property type="entry name" value="REGULATOR OF MICROTUBULE DYNAMICS PROTEIN"/>
    <property type="match status" value="1"/>
</dbReference>
<dbReference type="PANTHER" id="PTHR16056:SF18">
    <property type="entry name" value="REGULATOR OF MICROTUBULE DYNAMICS PROTEIN 3"/>
    <property type="match status" value="1"/>
</dbReference>
<dbReference type="Pfam" id="PF21033">
    <property type="entry name" value="RMD1-3"/>
    <property type="match status" value="1"/>
</dbReference>
<dbReference type="SUPFAM" id="SSF48452">
    <property type="entry name" value="TPR-like"/>
    <property type="match status" value="1"/>
</dbReference>
<feature type="chain" id="PRO_0000287514" description="Regulator of microtubule dynamics protein 3">
    <location>
        <begin position="1"/>
        <end position="463"/>
    </location>
</feature>
<feature type="topological domain" description="Mitochondrial intermembrane" evidence="5">
    <location>
        <begin position="1"/>
        <end position="4"/>
    </location>
</feature>
<feature type="transmembrane region" description="Helical" evidence="3">
    <location>
        <begin position="5"/>
        <end position="27"/>
    </location>
</feature>
<feature type="topological domain" description="Cytoplasmic" evidence="5">
    <location>
        <begin position="28"/>
        <end position="463"/>
    </location>
</feature>
<feature type="region of interest" description="Disordered" evidence="4">
    <location>
        <begin position="153"/>
        <end position="192"/>
    </location>
</feature>
<feature type="coiled-coil region" evidence="3">
    <location>
        <begin position="279"/>
        <end position="302"/>
    </location>
</feature>
<feature type="short sequence motif" description="FFAT" evidence="2">
    <location>
        <begin position="146"/>
        <end position="161"/>
    </location>
</feature>
<feature type="compositionally biased region" description="Basic and acidic residues" evidence="4">
    <location>
        <begin position="173"/>
        <end position="183"/>
    </location>
</feature>
<sequence length="463" mass="52020">MSKLILSYRIGLGLVVGAAAGAVIYIVFRRNRKKTRKWTSKQNGYYSQKGDELDTSNNLQAIPGEADILTGSRGEQLDLLNRLDYVLSSIVELHQEVETLRSSLHGLAEDIVGEVRTHLEENQRTLRRRRFLPHRERTDSTGSSSIYFTATSGAAHTDAESEGGYSTAYAESDFERESSRASEAEEEDEVSCETIRTMRRDSVDLVTDDDDDEATTIATDPVDEELTLLLQKSDELHSGSTEQQREGFQLLLNNKLLYGDHQEFLWRLARSYSDMCTIAEDAQEKKSFASEGKEEAEAALQKGDQNAECHKWFAILCGQLSEHEGIQKRIQTGYLFKEHIEKAISLKPGDARCYYLLGRWCYEVSNLGWLERKTASALYENPPTATVHEALQNFLKAEDLTPGFSKAARVLIAKCYKDLGNNATAAHWLKLAADLPNVTQEDRESTTTIEEMLPATAEEELLV</sequence>